<sequence length="417" mass="48079">MSVKPEKPVWMSQEDYDRQYGTVGDGENKTAIVEKTTITTQSSSNVVVGEASKTSSDIGANKIQKRKRHDDFALEEKKRRERERRLREEQLKEHEIKLTAEKITNVNNLVREHYNERTYIANRTKRNQSPIIKLRNFNNAIKFMLIDKFTHTGDVVLELGCGKGGDLRKYGAAGISQFIGIDISNASIQEAHKRYQSMKNLDFQAILITGDCFGESLGVAVEPFPECRFPCDVVSTQFCLHYAFETEEKARRALLNVSKSLKVGGRFFGTIPDSEFLRYKLNKIGKDVQEPKWGNQIYSIKFSNNDYHENGNEFPSPYGQMYTFWLEDAIDNVPEYVVPFETLRSLADEYGMELILQMPFNQFFVQEIPKWVNRFSPKMREGLTRSDGKYGVEGIEKEPAAYLYTVFAFKKVREHVE</sequence>
<evidence type="ECO:0000250" key="1"/>
<evidence type="ECO:0000250" key="2">
    <source>
        <dbReference type="UniProtKB" id="O43148"/>
    </source>
</evidence>
<evidence type="ECO:0000255" key="3">
    <source>
        <dbReference type="PROSITE-ProRule" id="PRU00895"/>
    </source>
</evidence>
<name>MCES_CANGA</name>
<organism>
    <name type="scientific">Candida glabrata (strain ATCC 2001 / BCRC 20586 / JCM 3761 / NBRC 0622 / NRRL Y-65 / CBS 138)</name>
    <name type="common">Yeast</name>
    <name type="synonym">Nakaseomyces glabratus</name>
    <dbReference type="NCBI Taxonomy" id="284593"/>
    <lineage>
        <taxon>Eukaryota</taxon>
        <taxon>Fungi</taxon>
        <taxon>Dikarya</taxon>
        <taxon>Ascomycota</taxon>
        <taxon>Saccharomycotina</taxon>
        <taxon>Saccharomycetes</taxon>
        <taxon>Saccharomycetales</taxon>
        <taxon>Saccharomycetaceae</taxon>
        <taxon>Nakaseomyces</taxon>
    </lineage>
</organism>
<keyword id="KW-0489">Methyltransferase</keyword>
<keyword id="KW-0506">mRNA capping</keyword>
<keyword id="KW-0507">mRNA processing</keyword>
<keyword id="KW-0539">Nucleus</keyword>
<keyword id="KW-1185">Reference proteome</keyword>
<keyword id="KW-0694">RNA-binding</keyword>
<keyword id="KW-0949">S-adenosyl-L-methionine</keyword>
<keyword id="KW-0808">Transferase</keyword>
<dbReference type="EC" id="2.1.1.56" evidence="2"/>
<dbReference type="EMBL" id="CR380957">
    <property type="protein sequence ID" value="CAG61491.1"/>
    <property type="molecule type" value="Genomic_DNA"/>
</dbReference>
<dbReference type="RefSeq" id="XP_448530.1">
    <property type="nucleotide sequence ID" value="XM_448530.1"/>
</dbReference>
<dbReference type="SMR" id="Q6FML4"/>
<dbReference type="FunCoup" id="Q6FML4">
    <property type="interactions" value="1087"/>
</dbReference>
<dbReference type="STRING" id="284593.Q6FML4"/>
<dbReference type="EnsemblFungi" id="CAGL0K07051g-T">
    <property type="protein sequence ID" value="CAGL0K07051g-T-p1"/>
    <property type="gene ID" value="CAGL0K07051g"/>
</dbReference>
<dbReference type="KEGG" id="cgr:2890389"/>
<dbReference type="CGD" id="CAL0134459">
    <property type="gene designation" value="CAGL0K07051g"/>
</dbReference>
<dbReference type="VEuPathDB" id="FungiDB:CAGL0K07051g"/>
<dbReference type="eggNOG" id="KOG1975">
    <property type="taxonomic scope" value="Eukaryota"/>
</dbReference>
<dbReference type="HOGENOM" id="CLU_020346_2_0_1"/>
<dbReference type="InParanoid" id="Q6FML4"/>
<dbReference type="OMA" id="LITGDCF"/>
<dbReference type="Proteomes" id="UP000002428">
    <property type="component" value="Chromosome K"/>
</dbReference>
<dbReference type="GO" id="GO:0005829">
    <property type="term" value="C:cytosol"/>
    <property type="evidence" value="ECO:0007669"/>
    <property type="project" value="EnsemblFungi"/>
</dbReference>
<dbReference type="GO" id="GO:0070693">
    <property type="term" value="C:P-TEFb-cap methyltransferase complex"/>
    <property type="evidence" value="ECO:0007669"/>
    <property type="project" value="EnsemblFungi"/>
</dbReference>
<dbReference type="GO" id="GO:0004482">
    <property type="term" value="F:mRNA 5'-cap (guanine-N7-)-methyltransferase activity"/>
    <property type="evidence" value="ECO:0007669"/>
    <property type="project" value="UniProtKB-EC"/>
</dbReference>
<dbReference type="GO" id="GO:0003723">
    <property type="term" value="F:RNA binding"/>
    <property type="evidence" value="ECO:0007669"/>
    <property type="project" value="UniProtKB-KW"/>
</dbReference>
<dbReference type="CDD" id="cd02440">
    <property type="entry name" value="AdoMet_MTases"/>
    <property type="match status" value="1"/>
</dbReference>
<dbReference type="FunFam" id="3.40.50.150:FF:000280">
    <property type="entry name" value="mRNA cap guanine-N7 methyltransferase"/>
    <property type="match status" value="1"/>
</dbReference>
<dbReference type="Gene3D" id="3.40.50.150">
    <property type="entry name" value="Vaccinia Virus protein VP39"/>
    <property type="match status" value="1"/>
</dbReference>
<dbReference type="InterPro" id="IPR004971">
    <property type="entry name" value="mRNA_G-N7_MeTrfase_dom"/>
</dbReference>
<dbReference type="InterPro" id="IPR016899">
    <property type="entry name" value="mRNA_G-N7_MeTrfase_euk"/>
</dbReference>
<dbReference type="InterPro" id="IPR039753">
    <property type="entry name" value="RG7MT1"/>
</dbReference>
<dbReference type="InterPro" id="IPR029063">
    <property type="entry name" value="SAM-dependent_MTases_sf"/>
</dbReference>
<dbReference type="PANTHER" id="PTHR12189:SF2">
    <property type="entry name" value="MRNA CAP GUANINE-N7 METHYLTRANSFERASE"/>
    <property type="match status" value="1"/>
</dbReference>
<dbReference type="PANTHER" id="PTHR12189">
    <property type="entry name" value="MRNA GUANINE-7- METHYLTRANSFERASE"/>
    <property type="match status" value="1"/>
</dbReference>
<dbReference type="Pfam" id="PF03291">
    <property type="entry name" value="mRNA_G-N7_MeTrfase"/>
    <property type="match status" value="1"/>
</dbReference>
<dbReference type="PIRSF" id="PIRSF028762">
    <property type="entry name" value="ABD1"/>
    <property type="match status" value="1"/>
</dbReference>
<dbReference type="SUPFAM" id="SSF53335">
    <property type="entry name" value="S-adenosyl-L-methionine-dependent methyltransferases"/>
    <property type="match status" value="1"/>
</dbReference>
<dbReference type="PROSITE" id="PS51562">
    <property type="entry name" value="RNA_CAP0_MT"/>
    <property type="match status" value="1"/>
</dbReference>
<comment type="function">
    <text evidence="1">Responsible for methylating the 5'-cap structure of mRNAs.</text>
</comment>
<comment type="catalytic activity">
    <reaction evidence="2 3">
        <text>a 5'-end (5'-triphosphoguanosine)-ribonucleoside in mRNA + S-adenosyl-L-methionine = a 5'-end (N(7)-methyl 5'-triphosphoguanosine)-ribonucleoside in mRNA + S-adenosyl-L-homocysteine</text>
        <dbReference type="Rhea" id="RHEA:67008"/>
        <dbReference type="Rhea" id="RHEA-COMP:17166"/>
        <dbReference type="Rhea" id="RHEA-COMP:17167"/>
        <dbReference type="ChEBI" id="CHEBI:57856"/>
        <dbReference type="ChEBI" id="CHEBI:59789"/>
        <dbReference type="ChEBI" id="CHEBI:156461"/>
        <dbReference type="ChEBI" id="CHEBI:167617"/>
        <dbReference type="EC" id="2.1.1.56"/>
    </reaction>
</comment>
<comment type="subcellular location">
    <subcellularLocation>
        <location evidence="1">Nucleus</location>
    </subcellularLocation>
</comment>
<comment type="similarity">
    <text evidence="3">Belongs to the class I-like SAM-binding methyltransferase superfamily. mRNA cap 0 methyltransferase family.</text>
</comment>
<proteinExistence type="inferred from homology"/>
<accession>Q6FML4</accession>
<feature type="chain" id="PRO_0000303906" description="mRNA cap guanine-N(7) methyltransferase">
    <location>
        <begin position="1"/>
        <end position="417"/>
    </location>
</feature>
<feature type="domain" description="mRNA cap 0 methyltransferase" evidence="3">
    <location>
        <begin position="129"/>
        <end position="412"/>
    </location>
</feature>
<feature type="binding site" evidence="3">
    <location>
        <begin position="138"/>
        <end position="139"/>
    </location>
    <ligand>
        <name>mRNA</name>
        <dbReference type="ChEBI" id="CHEBI:33699"/>
    </ligand>
    <ligandPart>
        <name>mRNA cap</name>
    </ligandPart>
</feature>
<feature type="binding site" evidence="3">
    <location>
        <position position="142"/>
    </location>
    <ligand>
        <name>S-adenosyl-L-methionine</name>
        <dbReference type="ChEBI" id="CHEBI:59789"/>
    </ligand>
</feature>
<feature type="binding site" evidence="3">
    <location>
        <position position="160"/>
    </location>
    <ligand>
        <name>S-adenosyl-L-methionine</name>
        <dbReference type="ChEBI" id="CHEBI:59789"/>
    </ligand>
</feature>
<feature type="binding site" evidence="3">
    <location>
        <position position="182"/>
    </location>
    <ligand>
        <name>S-adenosyl-L-methionine</name>
        <dbReference type="ChEBI" id="CHEBI:59789"/>
    </ligand>
</feature>
<feature type="binding site" evidence="2">
    <location>
        <position position="211"/>
    </location>
    <ligand>
        <name>S-adenosyl-L-methionine</name>
        <dbReference type="ChEBI" id="CHEBI:59789"/>
    </ligand>
</feature>
<feature type="binding site" evidence="2">
    <location>
        <position position="237"/>
    </location>
    <ligand>
        <name>S-adenosyl-L-methionine</name>
        <dbReference type="ChEBI" id="CHEBI:59789"/>
    </ligand>
</feature>
<feature type="binding site" evidence="2">
    <location>
        <position position="242"/>
    </location>
    <ligand>
        <name>S-adenosyl-L-methionine</name>
        <dbReference type="ChEBI" id="CHEBI:59789"/>
    </ligand>
</feature>
<feature type="site" description="mRNA cap binding" evidence="3">
    <location>
        <position position="163"/>
    </location>
</feature>
<feature type="site" description="mRNA cap binding" evidence="3">
    <location>
        <position position="169"/>
    </location>
</feature>
<feature type="site" description="mRNA cap binding" evidence="3">
    <location>
        <position position="194"/>
    </location>
</feature>
<feature type="site" description="mRNA cap binding" evidence="3">
    <location>
        <position position="241"/>
    </location>
</feature>
<feature type="site" description="mRNA cap binding" evidence="3">
    <location>
        <position position="335"/>
    </location>
</feature>
<feature type="site" description="mRNA cap binding" evidence="3">
    <location>
        <position position="404"/>
    </location>
</feature>
<protein>
    <recommendedName>
        <fullName>mRNA cap guanine-N(7) methyltransferase</fullName>
        <ecNumber evidence="2">2.1.1.56</ecNumber>
    </recommendedName>
    <alternativeName>
        <fullName>mRNA (guanine-N(7))-methyltransferase</fullName>
    </alternativeName>
    <alternativeName>
        <fullName>mRNA cap methyltransferase</fullName>
    </alternativeName>
</protein>
<reference key="1">
    <citation type="journal article" date="2004" name="Nature">
        <title>Genome evolution in yeasts.</title>
        <authorList>
            <person name="Dujon B."/>
            <person name="Sherman D."/>
            <person name="Fischer G."/>
            <person name="Durrens P."/>
            <person name="Casaregola S."/>
            <person name="Lafontaine I."/>
            <person name="de Montigny J."/>
            <person name="Marck C."/>
            <person name="Neuveglise C."/>
            <person name="Talla E."/>
            <person name="Goffard N."/>
            <person name="Frangeul L."/>
            <person name="Aigle M."/>
            <person name="Anthouard V."/>
            <person name="Babour A."/>
            <person name="Barbe V."/>
            <person name="Barnay S."/>
            <person name="Blanchin S."/>
            <person name="Beckerich J.-M."/>
            <person name="Beyne E."/>
            <person name="Bleykasten C."/>
            <person name="Boisrame A."/>
            <person name="Boyer J."/>
            <person name="Cattolico L."/>
            <person name="Confanioleri F."/>
            <person name="de Daruvar A."/>
            <person name="Despons L."/>
            <person name="Fabre E."/>
            <person name="Fairhead C."/>
            <person name="Ferry-Dumazet H."/>
            <person name="Groppi A."/>
            <person name="Hantraye F."/>
            <person name="Hennequin C."/>
            <person name="Jauniaux N."/>
            <person name="Joyet P."/>
            <person name="Kachouri R."/>
            <person name="Kerrest A."/>
            <person name="Koszul R."/>
            <person name="Lemaire M."/>
            <person name="Lesur I."/>
            <person name="Ma L."/>
            <person name="Muller H."/>
            <person name="Nicaud J.-M."/>
            <person name="Nikolski M."/>
            <person name="Oztas S."/>
            <person name="Ozier-Kalogeropoulos O."/>
            <person name="Pellenz S."/>
            <person name="Potier S."/>
            <person name="Richard G.-F."/>
            <person name="Straub M.-L."/>
            <person name="Suleau A."/>
            <person name="Swennen D."/>
            <person name="Tekaia F."/>
            <person name="Wesolowski-Louvel M."/>
            <person name="Westhof E."/>
            <person name="Wirth B."/>
            <person name="Zeniou-Meyer M."/>
            <person name="Zivanovic Y."/>
            <person name="Bolotin-Fukuhara M."/>
            <person name="Thierry A."/>
            <person name="Bouchier C."/>
            <person name="Caudron B."/>
            <person name="Scarpelli C."/>
            <person name="Gaillardin C."/>
            <person name="Weissenbach J."/>
            <person name="Wincker P."/>
            <person name="Souciet J.-L."/>
        </authorList>
    </citation>
    <scope>NUCLEOTIDE SEQUENCE [LARGE SCALE GENOMIC DNA]</scope>
    <source>
        <strain>ATCC 2001 / BCRC 20586 / JCM 3761 / NBRC 0622 / NRRL Y-65 / CBS 138</strain>
    </source>
</reference>
<gene>
    <name type="primary">ABD1</name>
    <name type="ordered locus">CAGL0K07051g</name>
</gene>